<keyword id="KW-1185">Reference proteome</keyword>
<keyword id="KW-0687">Ribonucleoprotein</keyword>
<keyword id="KW-0689">Ribosomal protein</keyword>
<dbReference type="EMBL" id="CP000961">
    <property type="protein sequence ID" value="ACA85449.1"/>
    <property type="molecule type" value="Genomic_DNA"/>
</dbReference>
<dbReference type="RefSeq" id="WP_012323795.1">
    <property type="nucleotide sequence ID" value="NC_010506.1"/>
</dbReference>
<dbReference type="SMR" id="B1KHE1"/>
<dbReference type="STRING" id="392500.Swoo_1156"/>
<dbReference type="KEGG" id="swd:Swoo_1156"/>
<dbReference type="eggNOG" id="COG0828">
    <property type="taxonomic scope" value="Bacteria"/>
</dbReference>
<dbReference type="HOGENOM" id="CLU_159258_1_0_6"/>
<dbReference type="Proteomes" id="UP000002168">
    <property type="component" value="Chromosome"/>
</dbReference>
<dbReference type="GO" id="GO:1990904">
    <property type="term" value="C:ribonucleoprotein complex"/>
    <property type="evidence" value="ECO:0007669"/>
    <property type="project" value="UniProtKB-KW"/>
</dbReference>
<dbReference type="GO" id="GO:0005840">
    <property type="term" value="C:ribosome"/>
    <property type="evidence" value="ECO:0007669"/>
    <property type="project" value="UniProtKB-KW"/>
</dbReference>
<dbReference type="GO" id="GO:0003735">
    <property type="term" value="F:structural constituent of ribosome"/>
    <property type="evidence" value="ECO:0007669"/>
    <property type="project" value="InterPro"/>
</dbReference>
<dbReference type="GO" id="GO:0006412">
    <property type="term" value="P:translation"/>
    <property type="evidence" value="ECO:0007669"/>
    <property type="project" value="UniProtKB-UniRule"/>
</dbReference>
<dbReference type="Gene3D" id="1.20.5.1150">
    <property type="entry name" value="Ribosomal protein S8"/>
    <property type="match status" value="1"/>
</dbReference>
<dbReference type="HAMAP" id="MF_00358">
    <property type="entry name" value="Ribosomal_bS21"/>
    <property type="match status" value="1"/>
</dbReference>
<dbReference type="InterPro" id="IPR001911">
    <property type="entry name" value="Ribosomal_bS21"/>
</dbReference>
<dbReference type="InterPro" id="IPR018278">
    <property type="entry name" value="Ribosomal_bS21_CS"/>
</dbReference>
<dbReference type="InterPro" id="IPR038380">
    <property type="entry name" value="Ribosomal_bS21_sf"/>
</dbReference>
<dbReference type="NCBIfam" id="TIGR00030">
    <property type="entry name" value="S21p"/>
    <property type="match status" value="1"/>
</dbReference>
<dbReference type="PANTHER" id="PTHR21109">
    <property type="entry name" value="MITOCHONDRIAL 28S RIBOSOMAL PROTEIN S21"/>
    <property type="match status" value="1"/>
</dbReference>
<dbReference type="PANTHER" id="PTHR21109:SF22">
    <property type="entry name" value="SMALL RIBOSOMAL SUBUNIT PROTEIN BS21"/>
    <property type="match status" value="1"/>
</dbReference>
<dbReference type="Pfam" id="PF01165">
    <property type="entry name" value="Ribosomal_S21"/>
    <property type="match status" value="1"/>
</dbReference>
<dbReference type="PRINTS" id="PR00976">
    <property type="entry name" value="RIBOSOMALS21"/>
</dbReference>
<dbReference type="PROSITE" id="PS01181">
    <property type="entry name" value="RIBOSOMAL_S21"/>
    <property type="match status" value="1"/>
</dbReference>
<reference key="1">
    <citation type="submission" date="2008-02" db="EMBL/GenBank/DDBJ databases">
        <title>Complete sequence of Shewanella woodyi ATCC 51908.</title>
        <authorList>
            <consortium name="US DOE Joint Genome Institute"/>
            <person name="Copeland A."/>
            <person name="Lucas S."/>
            <person name="Lapidus A."/>
            <person name="Glavina del Rio T."/>
            <person name="Dalin E."/>
            <person name="Tice H."/>
            <person name="Bruce D."/>
            <person name="Goodwin L."/>
            <person name="Pitluck S."/>
            <person name="Sims D."/>
            <person name="Brettin T."/>
            <person name="Detter J.C."/>
            <person name="Han C."/>
            <person name="Kuske C.R."/>
            <person name="Schmutz J."/>
            <person name="Larimer F."/>
            <person name="Land M."/>
            <person name="Hauser L."/>
            <person name="Kyrpides N."/>
            <person name="Lykidis A."/>
            <person name="Zhao J.-S."/>
            <person name="Richardson P."/>
        </authorList>
    </citation>
    <scope>NUCLEOTIDE SEQUENCE [LARGE SCALE GENOMIC DNA]</scope>
    <source>
        <strain>ATCC 51908 / MS32</strain>
    </source>
</reference>
<gene>
    <name evidence="1" type="primary">rpsU</name>
    <name type="ordered locus">Swoo_1156</name>
</gene>
<comment type="similarity">
    <text evidence="1">Belongs to the bacterial ribosomal protein bS21 family.</text>
</comment>
<accession>B1KHE1</accession>
<name>RS21_SHEWM</name>
<sequence length="71" mass="8331">MPIIKVRDNEPFDVALRRFKRSCEKAGILADVRAREFYEKPTTARKRAKAAAVKRLAKKLSRENARRVRLY</sequence>
<proteinExistence type="inferred from homology"/>
<evidence type="ECO:0000255" key="1">
    <source>
        <dbReference type="HAMAP-Rule" id="MF_00358"/>
    </source>
</evidence>
<evidence type="ECO:0000305" key="2"/>
<feature type="chain" id="PRO_1000120663" description="Small ribosomal subunit protein bS21">
    <location>
        <begin position="1"/>
        <end position="71"/>
    </location>
</feature>
<organism>
    <name type="scientific">Shewanella woodyi (strain ATCC 51908 / MS32)</name>
    <dbReference type="NCBI Taxonomy" id="392500"/>
    <lineage>
        <taxon>Bacteria</taxon>
        <taxon>Pseudomonadati</taxon>
        <taxon>Pseudomonadota</taxon>
        <taxon>Gammaproteobacteria</taxon>
        <taxon>Alteromonadales</taxon>
        <taxon>Shewanellaceae</taxon>
        <taxon>Shewanella</taxon>
    </lineage>
</organism>
<protein>
    <recommendedName>
        <fullName evidence="1">Small ribosomal subunit protein bS21</fullName>
    </recommendedName>
    <alternativeName>
        <fullName evidence="2">30S ribosomal protein S21</fullName>
    </alternativeName>
</protein>